<evidence type="ECO:0000255" key="1">
    <source>
        <dbReference type="HAMAP-Rule" id="MF_00251"/>
    </source>
</evidence>
<evidence type="ECO:0000305" key="2"/>
<dbReference type="EMBL" id="CP000680">
    <property type="protein sequence ID" value="ABP86635.1"/>
    <property type="molecule type" value="Genomic_DNA"/>
</dbReference>
<dbReference type="SMR" id="A4XZ69"/>
<dbReference type="STRING" id="399739.Pmen_3888"/>
<dbReference type="KEGG" id="pmy:Pmen_3888"/>
<dbReference type="eggNOG" id="COG0257">
    <property type="taxonomic scope" value="Bacteria"/>
</dbReference>
<dbReference type="HOGENOM" id="CLU_135723_6_2_6"/>
<dbReference type="OrthoDB" id="9802520at2"/>
<dbReference type="GO" id="GO:0005737">
    <property type="term" value="C:cytoplasm"/>
    <property type="evidence" value="ECO:0007669"/>
    <property type="project" value="UniProtKB-ARBA"/>
</dbReference>
<dbReference type="GO" id="GO:1990904">
    <property type="term" value="C:ribonucleoprotein complex"/>
    <property type="evidence" value="ECO:0007669"/>
    <property type="project" value="UniProtKB-KW"/>
</dbReference>
<dbReference type="GO" id="GO:0005840">
    <property type="term" value="C:ribosome"/>
    <property type="evidence" value="ECO:0007669"/>
    <property type="project" value="UniProtKB-KW"/>
</dbReference>
<dbReference type="GO" id="GO:0003735">
    <property type="term" value="F:structural constituent of ribosome"/>
    <property type="evidence" value="ECO:0007669"/>
    <property type="project" value="InterPro"/>
</dbReference>
<dbReference type="GO" id="GO:0006412">
    <property type="term" value="P:translation"/>
    <property type="evidence" value="ECO:0007669"/>
    <property type="project" value="UniProtKB-UniRule"/>
</dbReference>
<dbReference type="HAMAP" id="MF_00251">
    <property type="entry name" value="Ribosomal_bL36"/>
    <property type="match status" value="1"/>
</dbReference>
<dbReference type="InterPro" id="IPR000473">
    <property type="entry name" value="Ribosomal_bL36"/>
</dbReference>
<dbReference type="InterPro" id="IPR035977">
    <property type="entry name" value="Ribosomal_bL36_sp"/>
</dbReference>
<dbReference type="NCBIfam" id="TIGR01022">
    <property type="entry name" value="rpmJ_bact"/>
    <property type="match status" value="1"/>
</dbReference>
<dbReference type="PANTHER" id="PTHR42888">
    <property type="entry name" value="50S RIBOSOMAL PROTEIN L36, CHLOROPLASTIC"/>
    <property type="match status" value="1"/>
</dbReference>
<dbReference type="PANTHER" id="PTHR42888:SF1">
    <property type="entry name" value="LARGE RIBOSOMAL SUBUNIT PROTEIN BL36C"/>
    <property type="match status" value="1"/>
</dbReference>
<dbReference type="Pfam" id="PF00444">
    <property type="entry name" value="Ribosomal_L36"/>
    <property type="match status" value="1"/>
</dbReference>
<dbReference type="SUPFAM" id="SSF57840">
    <property type="entry name" value="Ribosomal protein L36"/>
    <property type="match status" value="1"/>
</dbReference>
<dbReference type="PROSITE" id="PS00828">
    <property type="entry name" value="RIBOSOMAL_L36"/>
    <property type="match status" value="1"/>
</dbReference>
<protein>
    <recommendedName>
        <fullName evidence="1">Large ribosomal subunit protein bL36</fullName>
    </recommendedName>
    <alternativeName>
        <fullName evidence="2">50S ribosomal protein L36</fullName>
    </alternativeName>
</protein>
<sequence length="38" mass="4434">MKVRASVKKLCRNCKIIRREGVVRVICSAEPRHKQRQG</sequence>
<comment type="similarity">
    <text evidence="1">Belongs to the bacterial ribosomal protein bL36 family.</text>
</comment>
<reference key="1">
    <citation type="submission" date="2007-04" db="EMBL/GenBank/DDBJ databases">
        <title>Complete sequence of Pseudomonas mendocina ymp.</title>
        <authorList>
            <consortium name="US DOE Joint Genome Institute"/>
            <person name="Copeland A."/>
            <person name="Lucas S."/>
            <person name="Lapidus A."/>
            <person name="Barry K."/>
            <person name="Glavina del Rio T."/>
            <person name="Dalin E."/>
            <person name="Tice H."/>
            <person name="Pitluck S."/>
            <person name="Kiss H."/>
            <person name="Brettin T."/>
            <person name="Detter J.C."/>
            <person name="Bruce D."/>
            <person name="Han C."/>
            <person name="Schmutz J."/>
            <person name="Larimer F."/>
            <person name="Land M."/>
            <person name="Hauser L."/>
            <person name="Kyrpides N."/>
            <person name="Mikhailova N."/>
            <person name="Hersman L."/>
            <person name="Dubois J."/>
            <person name="Maurice P."/>
            <person name="Richardson P."/>
        </authorList>
    </citation>
    <scope>NUCLEOTIDE SEQUENCE [LARGE SCALE GENOMIC DNA]</scope>
    <source>
        <strain>ymp</strain>
    </source>
</reference>
<accession>A4XZ69</accession>
<feature type="chain" id="PRO_1000003407" description="Large ribosomal subunit protein bL36">
    <location>
        <begin position="1"/>
        <end position="38"/>
    </location>
</feature>
<gene>
    <name evidence="1" type="primary">rpmJ</name>
    <name type="ordered locus">Pmen_3888</name>
</gene>
<name>RL36_ECTM1</name>
<organism>
    <name type="scientific">Ectopseudomonas mendocina (strain ymp)</name>
    <name type="common">Pseudomonas mendocina</name>
    <dbReference type="NCBI Taxonomy" id="399739"/>
    <lineage>
        <taxon>Bacteria</taxon>
        <taxon>Pseudomonadati</taxon>
        <taxon>Pseudomonadota</taxon>
        <taxon>Gammaproteobacteria</taxon>
        <taxon>Pseudomonadales</taxon>
        <taxon>Pseudomonadaceae</taxon>
        <taxon>Ectopseudomonas</taxon>
    </lineage>
</organism>
<proteinExistence type="inferred from homology"/>
<keyword id="KW-0687">Ribonucleoprotein</keyword>
<keyword id="KW-0689">Ribosomal protein</keyword>